<evidence type="ECO:0000255" key="1">
    <source>
        <dbReference type="HAMAP-Rule" id="MF_00191"/>
    </source>
</evidence>
<feature type="chain" id="PRO_0000128855" description="4-hydroxy-3-methylbut-2-enyl diphosphate reductase">
    <location>
        <begin position="1"/>
        <end position="398"/>
    </location>
</feature>
<feature type="active site" description="Proton donor" evidence="1">
    <location>
        <position position="187"/>
    </location>
</feature>
<feature type="binding site" evidence="1">
    <location>
        <position position="66"/>
    </location>
    <ligand>
        <name>[4Fe-4S] cluster</name>
        <dbReference type="ChEBI" id="CHEBI:49883"/>
    </ligand>
</feature>
<feature type="binding site" evidence="1">
    <location>
        <position position="96"/>
    </location>
    <ligand>
        <name>(2E)-4-hydroxy-3-methylbut-2-enyl diphosphate</name>
        <dbReference type="ChEBI" id="CHEBI:128753"/>
    </ligand>
</feature>
<feature type="binding site" evidence="1">
    <location>
        <position position="96"/>
    </location>
    <ligand>
        <name>dimethylallyl diphosphate</name>
        <dbReference type="ChEBI" id="CHEBI:57623"/>
    </ligand>
</feature>
<feature type="binding site" evidence="1">
    <location>
        <position position="96"/>
    </location>
    <ligand>
        <name>isopentenyl diphosphate</name>
        <dbReference type="ChEBI" id="CHEBI:128769"/>
    </ligand>
</feature>
<feature type="binding site" evidence="1">
    <location>
        <position position="157"/>
    </location>
    <ligand>
        <name>[4Fe-4S] cluster</name>
        <dbReference type="ChEBI" id="CHEBI:49883"/>
    </ligand>
</feature>
<feature type="binding site" evidence="1">
    <location>
        <position position="185"/>
    </location>
    <ligand>
        <name>(2E)-4-hydroxy-3-methylbut-2-enyl diphosphate</name>
        <dbReference type="ChEBI" id="CHEBI:128753"/>
    </ligand>
</feature>
<feature type="binding site" evidence="1">
    <location>
        <position position="185"/>
    </location>
    <ligand>
        <name>dimethylallyl diphosphate</name>
        <dbReference type="ChEBI" id="CHEBI:57623"/>
    </ligand>
</feature>
<feature type="binding site" evidence="1">
    <location>
        <position position="185"/>
    </location>
    <ligand>
        <name>isopentenyl diphosphate</name>
        <dbReference type="ChEBI" id="CHEBI:128769"/>
    </ligand>
</feature>
<feature type="binding site" evidence="1">
    <location>
        <position position="250"/>
    </location>
    <ligand>
        <name>(2E)-4-hydroxy-3-methylbut-2-enyl diphosphate</name>
        <dbReference type="ChEBI" id="CHEBI:128753"/>
    </ligand>
</feature>
<feature type="binding site" evidence="1">
    <location>
        <position position="288"/>
    </location>
    <ligand>
        <name>[4Fe-4S] cluster</name>
        <dbReference type="ChEBI" id="CHEBI:49883"/>
    </ligand>
</feature>
<feature type="binding site" evidence="1">
    <location>
        <position position="317"/>
    </location>
    <ligand>
        <name>(2E)-4-hydroxy-3-methylbut-2-enyl diphosphate</name>
        <dbReference type="ChEBI" id="CHEBI:128753"/>
    </ligand>
</feature>
<feature type="binding site" evidence="1">
    <location>
        <position position="317"/>
    </location>
    <ligand>
        <name>dimethylallyl diphosphate</name>
        <dbReference type="ChEBI" id="CHEBI:57623"/>
    </ligand>
</feature>
<feature type="binding site" evidence="1">
    <location>
        <position position="317"/>
    </location>
    <ligand>
        <name>isopentenyl diphosphate</name>
        <dbReference type="ChEBI" id="CHEBI:128769"/>
    </ligand>
</feature>
<feature type="binding site" evidence="1">
    <location>
        <position position="318"/>
    </location>
    <ligand>
        <name>(2E)-4-hydroxy-3-methylbut-2-enyl diphosphate</name>
        <dbReference type="ChEBI" id="CHEBI:128753"/>
    </ligand>
</feature>
<feature type="binding site" evidence="1">
    <location>
        <position position="318"/>
    </location>
    <ligand>
        <name>dimethylallyl diphosphate</name>
        <dbReference type="ChEBI" id="CHEBI:57623"/>
    </ligand>
</feature>
<feature type="binding site" evidence="1">
    <location>
        <position position="318"/>
    </location>
    <ligand>
        <name>isopentenyl diphosphate</name>
        <dbReference type="ChEBI" id="CHEBI:128769"/>
    </ligand>
</feature>
<feature type="binding site" evidence="1">
    <location>
        <position position="319"/>
    </location>
    <ligand>
        <name>(2E)-4-hydroxy-3-methylbut-2-enyl diphosphate</name>
        <dbReference type="ChEBI" id="CHEBI:128753"/>
    </ligand>
</feature>
<feature type="binding site" evidence="1">
    <location>
        <position position="319"/>
    </location>
    <ligand>
        <name>dimethylallyl diphosphate</name>
        <dbReference type="ChEBI" id="CHEBI:57623"/>
    </ligand>
</feature>
<feature type="binding site" evidence="1">
    <location>
        <position position="319"/>
    </location>
    <ligand>
        <name>isopentenyl diphosphate</name>
        <dbReference type="ChEBI" id="CHEBI:128769"/>
    </ligand>
</feature>
<feature type="binding site" evidence="1">
    <location>
        <position position="379"/>
    </location>
    <ligand>
        <name>(2E)-4-hydroxy-3-methylbut-2-enyl diphosphate</name>
        <dbReference type="ChEBI" id="CHEBI:128753"/>
    </ligand>
</feature>
<feature type="binding site" evidence="1">
    <location>
        <position position="379"/>
    </location>
    <ligand>
        <name>dimethylallyl diphosphate</name>
        <dbReference type="ChEBI" id="CHEBI:57623"/>
    </ligand>
</feature>
<feature type="binding site" evidence="1">
    <location>
        <position position="379"/>
    </location>
    <ligand>
        <name>isopentenyl diphosphate</name>
        <dbReference type="ChEBI" id="CHEBI:128769"/>
    </ligand>
</feature>
<dbReference type="EC" id="1.17.7.4" evidence="1"/>
<dbReference type="EMBL" id="BX548175">
    <property type="protein sequence ID" value="CAE22029.1"/>
    <property type="molecule type" value="Genomic_DNA"/>
</dbReference>
<dbReference type="RefSeq" id="WP_011131221.1">
    <property type="nucleotide sequence ID" value="NC_005071.1"/>
</dbReference>
<dbReference type="SMR" id="Q7V4T7"/>
<dbReference type="DNASU" id="1728896"/>
<dbReference type="KEGG" id="pmt:PMT_1854"/>
<dbReference type="eggNOG" id="COG0761">
    <property type="taxonomic scope" value="Bacteria"/>
</dbReference>
<dbReference type="HOGENOM" id="CLU_027486_4_0_3"/>
<dbReference type="OrthoDB" id="9804077at2"/>
<dbReference type="UniPathway" id="UPA00056">
    <property type="reaction ID" value="UER00097"/>
</dbReference>
<dbReference type="UniPathway" id="UPA00059">
    <property type="reaction ID" value="UER00105"/>
</dbReference>
<dbReference type="Proteomes" id="UP000001423">
    <property type="component" value="Chromosome"/>
</dbReference>
<dbReference type="GO" id="GO:0051539">
    <property type="term" value="F:4 iron, 4 sulfur cluster binding"/>
    <property type="evidence" value="ECO:0007669"/>
    <property type="project" value="UniProtKB-UniRule"/>
</dbReference>
<dbReference type="GO" id="GO:0051745">
    <property type="term" value="F:4-hydroxy-3-methylbut-2-enyl diphosphate reductase activity"/>
    <property type="evidence" value="ECO:0007669"/>
    <property type="project" value="UniProtKB-UniRule"/>
</dbReference>
<dbReference type="GO" id="GO:0046872">
    <property type="term" value="F:metal ion binding"/>
    <property type="evidence" value="ECO:0007669"/>
    <property type="project" value="UniProtKB-KW"/>
</dbReference>
<dbReference type="GO" id="GO:0050992">
    <property type="term" value="P:dimethylallyl diphosphate biosynthetic process"/>
    <property type="evidence" value="ECO:0007669"/>
    <property type="project" value="UniProtKB-UniRule"/>
</dbReference>
<dbReference type="GO" id="GO:0019288">
    <property type="term" value="P:isopentenyl diphosphate biosynthetic process, methylerythritol 4-phosphate pathway"/>
    <property type="evidence" value="ECO:0007669"/>
    <property type="project" value="UniProtKB-UniRule"/>
</dbReference>
<dbReference type="GO" id="GO:0016114">
    <property type="term" value="P:terpenoid biosynthetic process"/>
    <property type="evidence" value="ECO:0007669"/>
    <property type="project" value="UniProtKB-UniRule"/>
</dbReference>
<dbReference type="CDD" id="cd13944">
    <property type="entry name" value="lytB_ispH"/>
    <property type="match status" value="1"/>
</dbReference>
<dbReference type="Gene3D" id="3.40.50.11270">
    <property type="match status" value="1"/>
</dbReference>
<dbReference type="Gene3D" id="3.40.1010.20">
    <property type="entry name" value="4-hydroxy-3-methylbut-2-enyl diphosphate reductase, catalytic domain"/>
    <property type="match status" value="2"/>
</dbReference>
<dbReference type="HAMAP" id="MF_00191">
    <property type="entry name" value="IspH"/>
    <property type="match status" value="1"/>
</dbReference>
<dbReference type="InterPro" id="IPR003451">
    <property type="entry name" value="LytB/IspH"/>
</dbReference>
<dbReference type="NCBIfam" id="TIGR00216">
    <property type="entry name" value="ispH_lytB"/>
    <property type="match status" value="1"/>
</dbReference>
<dbReference type="NCBIfam" id="NF009911">
    <property type="entry name" value="PRK13371.1"/>
    <property type="match status" value="1"/>
</dbReference>
<dbReference type="PANTHER" id="PTHR31619">
    <property type="entry name" value="4-HYDROXY-3-METHYLBUT-2-ENYL DIPHOSPHATE REDUCTASE, CHLOROPLASTIC"/>
    <property type="match status" value="1"/>
</dbReference>
<dbReference type="PANTHER" id="PTHR31619:SF5">
    <property type="entry name" value="4-HYDROXY-3-METHYLBUT-2-ENYL DIPHOSPHATE REDUCTASE, CHLOROPLASTIC"/>
    <property type="match status" value="1"/>
</dbReference>
<dbReference type="Pfam" id="PF02401">
    <property type="entry name" value="LYTB"/>
    <property type="match status" value="1"/>
</dbReference>
<accession>Q7V4T7</accession>
<organism>
    <name type="scientific">Prochlorococcus marinus (strain MIT 9313)</name>
    <dbReference type="NCBI Taxonomy" id="74547"/>
    <lineage>
        <taxon>Bacteria</taxon>
        <taxon>Bacillati</taxon>
        <taxon>Cyanobacteriota</taxon>
        <taxon>Cyanophyceae</taxon>
        <taxon>Synechococcales</taxon>
        <taxon>Prochlorococcaceae</taxon>
        <taxon>Prochlorococcus</taxon>
    </lineage>
</organism>
<sequence>MDTQAFKRSLHHSERYNRRGFGRANEVASNLEKAYQSSLIGSIRDNGYVLQHGRLQVKLAEAFGFCWGVERAVAMAYETRRHYPSERIWITNEIIHNPSVNEHLREMDVLFIHAEGGVKDFSCVNDGDVVILPAFGATVQEMELLHERGCHIIDTTCPWVSKVWHTVEKHKKQEFTSIIHGKVKHEETLATSSFAGTYLVVLDLDEAQLVADYILGQGDRAAFMKRFAKACSANFDPDQDLQRLGVANQTTMLKSETEEIGRLFERTMLRKYGPIELNKHFLSFNTICDATEERQQAMFSLVDEPLDLLVVIGGFNSSNTTHLQEIAISRGIRSFHIDTPERIGDNNSIQHKPLGEDLFIESNFLPAGSVSVGITSGASTPDRVVEHVIQKLIDLTSG</sequence>
<comment type="function">
    <text evidence="1">Catalyzes the conversion of 1-hydroxy-2-methyl-2-(E)-butenyl 4-diphosphate (HMBPP) into a mixture of isopentenyl diphosphate (IPP) and dimethylallyl diphosphate (DMAPP). Acts in the terminal step of the DOXP/MEP pathway for isoprenoid precursor biosynthesis.</text>
</comment>
<comment type="catalytic activity">
    <reaction evidence="1">
        <text>isopentenyl diphosphate + 2 oxidized [2Fe-2S]-[ferredoxin] + H2O = (2E)-4-hydroxy-3-methylbut-2-enyl diphosphate + 2 reduced [2Fe-2S]-[ferredoxin] + 2 H(+)</text>
        <dbReference type="Rhea" id="RHEA:24488"/>
        <dbReference type="Rhea" id="RHEA-COMP:10000"/>
        <dbReference type="Rhea" id="RHEA-COMP:10001"/>
        <dbReference type="ChEBI" id="CHEBI:15377"/>
        <dbReference type="ChEBI" id="CHEBI:15378"/>
        <dbReference type="ChEBI" id="CHEBI:33737"/>
        <dbReference type="ChEBI" id="CHEBI:33738"/>
        <dbReference type="ChEBI" id="CHEBI:128753"/>
        <dbReference type="ChEBI" id="CHEBI:128769"/>
        <dbReference type="EC" id="1.17.7.4"/>
    </reaction>
</comment>
<comment type="catalytic activity">
    <reaction evidence="1">
        <text>dimethylallyl diphosphate + 2 oxidized [2Fe-2S]-[ferredoxin] + H2O = (2E)-4-hydroxy-3-methylbut-2-enyl diphosphate + 2 reduced [2Fe-2S]-[ferredoxin] + 2 H(+)</text>
        <dbReference type="Rhea" id="RHEA:24825"/>
        <dbReference type="Rhea" id="RHEA-COMP:10000"/>
        <dbReference type="Rhea" id="RHEA-COMP:10001"/>
        <dbReference type="ChEBI" id="CHEBI:15377"/>
        <dbReference type="ChEBI" id="CHEBI:15378"/>
        <dbReference type="ChEBI" id="CHEBI:33737"/>
        <dbReference type="ChEBI" id="CHEBI:33738"/>
        <dbReference type="ChEBI" id="CHEBI:57623"/>
        <dbReference type="ChEBI" id="CHEBI:128753"/>
        <dbReference type="EC" id="1.17.7.4"/>
    </reaction>
</comment>
<comment type="cofactor">
    <cofactor evidence="1">
        <name>[4Fe-4S] cluster</name>
        <dbReference type="ChEBI" id="CHEBI:49883"/>
    </cofactor>
    <text evidence="1">Binds 1 [4Fe-4S] cluster per subunit.</text>
</comment>
<comment type="pathway">
    <text evidence="1">Isoprenoid biosynthesis; dimethylallyl diphosphate biosynthesis; dimethylallyl diphosphate from (2E)-4-hydroxy-3-methylbutenyl diphosphate: step 1/1.</text>
</comment>
<comment type="pathway">
    <text evidence="1">Isoprenoid biosynthesis; isopentenyl diphosphate biosynthesis via DXP pathway; isopentenyl diphosphate from 1-deoxy-D-xylulose 5-phosphate: step 6/6.</text>
</comment>
<comment type="similarity">
    <text evidence="1">Belongs to the IspH family.</text>
</comment>
<name>ISPH_PROMM</name>
<protein>
    <recommendedName>
        <fullName evidence="1">4-hydroxy-3-methylbut-2-enyl diphosphate reductase</fullName>
        <shortName evidence="1">HMBPP reductase</shortName>
        <ecNumber evidence="1">1.17.7.4</ecNumber>
    </recommendedName>
</protein>
<gene>
    <name evidence="1" type="primary">ispH</name>
    <name type="synonym">lytB</name>
    <name type="ordered locus">PMT_1854</name>
</gene>
<keyword id="KW-0004">4Fe-4S</keyword>
<keyword id="KW-0408">Iron</keyword>
<keyword id="KW-0411">Iron-sulfur</keyword>
<keyword id="KW-0414">Isoprene biosynthesis</keyword>
<keyword id="KW-0479">Metal-binding</keyword>
<keyword id="KW-0560">Oxidoreductase</keyword>
<keyword id="KW-1185">Reference proteome</keyword>
<reference key="1">
    <citation type="journal article" date="2003" name="Nature">
        <title>Genome divergence in two Prochlorococcus ecotypes reflects oceanic niche differentiation.</title>
        <authorList>
            <person name="Rocap G."/>
            <person name="Larimer F.W."/>
            <person name="Lamerdin J.E."/>
            <person name="Malfatti S."/>
            <person name="Chain P."/>
            <person name="Ahlgren N.A."/>
            <person name="Arellano A."/>
            <person name="Coleman M."/>
            <person name="Hauser L."/>
            <person name="Hess W.R."/>
            <person name="Johnson Z.I."/>
            <person name="Land M.L."/>
            <person name="Lindell D."/>
            <person name="Post A.F."/>
            <person name="Regala W."/>
            <person name="Shah M."/>
            <person name="Shaw S.L."/>
            <person name="Steglich C."/>
            <person name="Sullivan M.B."/>
            <person name="Ting C.S."/>
            <person name="Tolonen A."/>
            <person name="Webb E.A."/>
            <person name="Zinser E.R."/>
            <person name="Chisholm S.W."/>
        </authorList>
    </citation>
    <scope>NUCLEOTIDE SEQUENCE [LARGE SCALE GENOMIC DNA]</scope>
    <source>
        <strain>MIT 9313</strain>
    </source>
</reference>
<proteinExistence type="inferred from homology"/>